<protein>
    <recommendedName>
        <fullName evidence="1">Small, acid-soluble spore protein N</fullName>
        <shortName evidence="1">SASP N</shortName>
    </recommendedName>
</protein>
<name>SSPN_BACCQ</name>
<feature type="chain" id="PRO_1000185029" description="Small, acid-soluble spore protein N">
    <location>
        <begin position="1"/>
        <end position="44"/>
    </location>
</feature>
<feature type="region of interest" description="Disordered" evidence="2">
    <location>
        <begin position="1"/>
        <end position="44"/>
    </location>
</feature>
<keyword id="KW-0749">Sporulation</keyword>
<gene>
    <name evidence="1" type="primary">sspN</name>
    <name type="ordered locus">BCQ_3403</name>
</gene>
<reference key="1">
    <citation type="journal article" date="2009" name="J. Bacteriol.">
        <title>Complete genome sequence of the extremophilic Bacillus cereus strain Q1 with industrial applications.</title>
        <authorList>
            <person name="Xiong Z."/>
            <person name="Jiang Y."/>
            <person name="Qi D."/>
            <person name="Lu H."/>
            <person name="Yang F."/>
            <person name="Yang J."/>
            <person name="Chen L."/>
            <person name="Sun L."/>
            <person name="Xu X."/>
            <person name="Xue Y."/>
            <person name="Zhu Y."/>
            <person name="Jin Q."/>
        </authorList>
    </citation>
    <scope>NUCLEOTIDE SEQUENCE [LARGE SCALE GENOMIC DNA]</scope>
    <source>
        <strain>Q1</strain>
    </source>
</reference>
<accession>B9IUC1</accession>
<comment type="subcellular location">
    <subcellularLocation>
        <location evidence="1">Spore core</location>
    </subcellularLocation>
</comment>
<comment type="induction">
    <text evidence="1">Expressed only in the forespore compartment of sporulating cells.</text>
</comment>
<comment type="similarity">
    <text evidence="1">Belongs to the SspN family.</text>
</comment>
<evidence type="ECO:0000255" key="1">
    <source>
        <dbReference type="HAMAP-Rule" id="MF_01505"/>
    </source>
</evidence>
<evidence type="ECO:0000256" key="2">
    <source>
        <dbReference type="SAM" id="MobiDB-lite"/>
    </source>
</evidence>
<organism>
    <name type="scientific">Bacillus cereus (strain Q1)</name>
    <dbReference type="NCBI Taxonomy" id="361100"/>
    <lineage>
        <taxon>Bacteria</taxon>
        <taxon>Bacillati</taxon>
        <taxon>Bacillota</taxon>
        <taxon>Bacilli</taxon>
        <taxon>Bacillales</taxon>
        <taxon>Bacillaceae</taxon>
        <taxon>Bacillus</taxon>
        <taxon>Bacillus cereus group</taxon>
    </lineage>
</organism>
<proteinExistence type="inferred from homology"/>
<sequence length="44" mass="4681">MGNPKKNSKDFAPNHIGTQSKKAGGNKGKQMQDQTGKQPIVDNG</sequence>
<dbReference type="EMBL" id="CP000227">
    <property type="protein sequence ID" value="ACM13831.1"/>
    <property type="molecule type" value="Genomic_DNA"/>
</dbReference>
<dbReference type="KEGG" id="bcq:BCQ_3403"/>
<dbReference type="HOGENOM" id="CLU_216714_0_0_9"/>
<dbReference type="Proteomes" id="UP000000441">
    <property type="component" value="Chromosome"/>
</dbReference>
<dbReference type="GO" id="GO:0042601">
    <property type="term" value="C:endospore-forming forespore"/>
    <property type="evidence" value="ECO:0007669"/>
    <property type="project" value="InterPro"/>
</dbReference>
<dbReference type="GO" id="GO:0030436">
    <property type="term" value="P:asexual sporulation"/>
    <property type="evidence" value="ECO:0007669"/>
    <property type="project" value="UniProtKB-UniRule"/>
</dbReference>
<dbReference type="GO" id="GO:0030435">
    <property type="term" value="P:sporulation resulting in formation of a cellular spore"/>
    <property type="evidence" value="ECO:0007669"/>
    <property type="project" value="UniProtKB-KW"/>
</dbReference>
<dbReference type="HAMAP" id="MF_01505">
    <property type="entry name" value="SspN"/>
    <property type="match status" value="1"/>
</dbReference>
<dbReference type="InterPro" id="IPR012612">
    <property type="entry name" value="SASP_SspN"/>
</dbReference>
<dbReference type="NCBIfam" id="NF006904">
    <property type="entry name" value="PRK09398.1"/>
    <property type="match status" value="1"/>
</dbReference>
<dbReference type="Pfam" id="PF08177">
    <property type="entry name" value="SspN"/>
    <property type="match status" value="1"/>
</dbReference>